<gene>
    <name type="ordered locus">ECU02_1590</name>
</gene>
<gene>
    <name type="ordered locus">ECU04_0060</name>
</gene>
<gene>
    <name type="ordered locus">ECU08_2120</name>
</gene>
<accession>Q8STG8</accession>
<keyword id="KW-1185">Reference proteome</keyword>
<proteinExistence type="inferred from homology"/>
<reference key="1">
    <citation type="journal article" date="2001" name="Nature">
        <title>Genome sequence and gene compaction of the eukaryote parasite Encephalitozoon cuniculi.</title>
        <authorList>
            <person name="Katinka M.D."/>
            <person name="Duprat S."/>
            <person name="Cornillot E."/>
            <person name="Metenier G."/>
            <person name="Thomarat F."/>
            <person name="Prensier G."/>
            <person name="Barbe V."/>
            <person name="Peyretaillade E."/>
            <person name="Brottier P."/>
            <person name="Wincker P."/>
            <person name="Delbac F."/>
            <person name="El Alaoui H."/>
            <person name="Peyret P."/>
            <person name="Saurin W."/>
            <person name="Gouy M."/>
            <person name="Weissenbach J."/>
            <person name="Vivares C.P."/>
        </authorList>
    </citation>
    <scope>NUCLEOTIDE SEQUENCE [LARGE SCALE GENOMIC DNA]</scope>
    <source>
        <strain>GB-M1</strain>
    </source>
</reference>
<dbReference type="EMBL" id="AL590442">
    <property type="protein sequence ID" value="CAD25188.1"/>
    <property type="molecule type" value="Genomic_DNA"/>
</dbReference>
<dbReference type="EMBL" id="AL590444">
    <property type="protein sequence ID" value="CAD25193.1"/>
    <property type="molecule type" value="Genomic_DNA"/>
</dbReference>
<dbReference type="EMBL" id="AL590448">
    <property type="protein sequence ID" value="CAD26514.1"/>
    <property type="molecule type" value="Genomic_DNA"/>
</dbReference>
<dbReference type="RefSeq" id="NP_584684.1">
    <property type="nucleotide sequence ID" value="NM_001040873.1"/>
</dbReference>
<dbReference type="RefSeq" id="NP_584689.1">
    <property type="nucleotide sequence ID" value="NM_001041039.1"/>
</dbReference>
<dbReference type="RefSeq" id="NP_597338.1">
    <property type="nucleotide sequence ID" value="NM_001041947.1"/>
</dbReference>
<dbReference type="GeneID" id="858674"/>
<dbReference type="GeneID" id="858837"/>
<dbReference type="GeneID" id="859760"/>
<dbReference type="KEGG" id="ecu:ECU02_1590"/>
<dbReference type="KEGG" id="ecu:ECU04_0060"/>
<dbReference type="KEGG" id="ecu:ECU08_2120"/>
<dbReference type="VEuPathDB" id="MicrosporidiaDB:ECU02_1590"/>
<dbReference type="VEuPathDB" id="MicrosporidiaDB:ECU04_0060"/>
<dbReference type="VEuPathDB" id="MicrosporidiaDB:ECU08_2120"/>
<dbReference type="HOGENOM" id="CLU_1331943_0_0_1"/>
<dbReference type="InParanoid" id="Q8STG8"/>
<dbReference type="Proteomes" id="UP000000819">
    <property type="component" value="Chromosome II"/>
</dbReference>
<dbReference type="Proteomes" id="UP000000819">
    <property type="component" value="Chromosome IV"/>
</dbReference>
<dbReference type="Proteomes" id="UP000000819">
    <property type="component" value="Chromosome VIII"/>
</dbReference>
<organism>
    <name type="scientific">Encephalitozoon cuniculi (strain GB-M1)</name>
    <name type="common">Microsporidian parasite</name>
    <dbReference type="NCBI Taxonomy" id="284813"/>
    <lineage>
        <taxon>Eukaryota</taxon>
        <taxon>Fungi</taxon>
        <taxon>Fungi incertae sedis</taxon>
        <taxon>Microsporidia</taxon>
        <taxon>Unikaryonidae</taxon>
        <taxon>Encephalitozoon</taxon>
    </lineage>
</organism>
<comment type="similarity">
    <text evidence="2">Belongs to the UPF0328 family.</text>
</comment>
<protein>
    <recommendedName>
        <fullName>UPF0328 protein ECU02_1590/ECU04_0060/ECU08_2120</fullName>
    </recommendedName>
</protein>
<evidence type="ECO:0000256" key="1">
    <source>
        <dbReference type="SAM" id="MobiDB-lite"/>
    </source>
</evidence>
<evidence type="ECO:0000305" key="2"/>
<feature type="chain" id="PRO_0000223114" description="UPF0328 protein ECU02_1590/ECU04_0060/ECU08_2120">
    <location>
        <begin position="1"/>
        <end position="207"/>
    </location>
</feature>
<feature type="region of interest" description="Disordered" evidence="1">
    <location>
        <begin position="1"/>
        <end position="154"/>
    </location>
</feature>
<feature type="region of interest" description="Disordered" evidence="1">
    <location>
        <begin position="180"/>
        <end position="207"/>
    </location>
</feature>
<feature type="compositionally biased region" description="Basic and acidic residues" evidence="1">
    <location>
        <begin position="14"/>
        <end position="24"/>
    </location>
</feature>
<feature type="compositionally biased region" description="Basic and acidic residues" evidence="1">
    <location>
        <begin position="75"/>
        <end position="97"/>
    </location>
</feature>
<feature type="compositionally biased region" description="Polar residues" evidence="1">
    <location>
        <begin position="98"/>
        <end position="121"/>
    </location>
</feature>
<feature type="compositionally biased region" description="Polar residues" evidence="1">
    <location>
        <begin position="133"/>
        <end position="149"/>
    </location>
</feature>
<name>Y2F9_ENCCU</name>
<sequence length="207" mass="22832">MPRPASHLAPMPSDHPDFRSESSARLRCQPPRTNNCGTFKQPPSVAATSRPKPGNPFLQPPTKGTPPPKKKKKNHTEGCHTHEANPEPNTKHTETESPKPQTSTQHHTPITIPSSLLSQNTQREKRGLPLLTSRPSTIPANTYQPQSPHIHSHTPLQRPISTALLHQNLHIRARNIRHTGRLHGSPTKGAQTAQQAQPHPPKQLATL</sequence>